<evidence type="ECO:0000255" key="1">
    <source>
        <dbReference type="HAMAP-Rule" id="MF_01200"/>
    </source>
</evidence>
<name>PYRF_BAUCH</name>
<feature type="chain" id="PRO_1000065894" description="Orotidine 5'-phosphate decarboxylase">
    <location>
        <begin position="1"/>
        <end position="249"/>
    </location>
</feature>
<feature type="active site" description="Proton donor" evidence="1">
    <location>
        <position position="69"/>
    </location>
</feature>
<feature type="binding site" evidence="1">
    <location>
        <position position="18"/>
    </location>
    <ligand>
        <name>substrate</name>
    </ligand>
</feature>
<feature type="binding site" evidence="1">
    <location>
        <position position="40"/>
    </location>
    <ligand>
        <name>substrate</name>
    </ligand>
</feature>
<feature type="binding site" evidence="1">
    <location>
        <begin position="67"/>
        <end position="76"/>
    </location>
    <ligand>
        <name>substrate</name>
    </ligand>
</feature>
<feature type="binding site" evidence="1">
    <location>
        <position position="127"/>
    </location>
    <ligand>
        <name>substrate</name>
    </ligand>
</feature>
<feature type="binding site" evidence="1">
    <location>
        <position position="188"/>
    </location>
    <ligand>
        <name>substrate</name>
    </ligand>
</feature>
<feature type="binding site" evidence="1">
    <location>
        <position position="197"/>
    </location>
    <ligand>
        <name>substrate</name>
    </ligand>
</feature>
<feature type="binding site" evidence="1">
    <location>
        <position position="217"/>
    </location>
    <ligand>
        <name>substrate</name>
    </ligand>
</feature>
<feature type="binding site" evidence="1">
    <location>
        <position position="218"/>
    </location>
    <ligand>
        <name>substrate</name>
    </ligand>
</feature>
<dbReference type="EC" id="4.1.1.23" evidence="1"/>
<dbReference type="EMBL" id="CP000238">
    <property type="protein sequence ID" value="ABF14192.1"/>
    <property type="molecule type" value="Genomic_DNA"/>
</dbReference>
<dbReference type="RefSeq" id="WP_011520480.1">
    <property type="nucleotide sequence ID" value="NC_007984.1"/>
</dbReference>
<dbReference type="SMR" id="Q1LTG7"/>
<dbReference type="STRING" id="374463.BCI_0298"/>
<dbReference type="KEGG" id="bci:BCI_0298"/>
<dbReference type="HOGENOM" id="CLU_067069_0_0_6"/>
<dbReference type="OrthoDB" id="9806203at2"/>
<dbReference type="UniPathway" id="UPA00070">
    <property type="reaction ID" value="UER00120"/>
</dbReference>
<dbReference type="Proteomes" id="UP000002427">
    <property type="component" value="Chromosome"/>
</dbReference>
<dbReference type="GO" id="GO:0005829">
    <property type="term" value="C:cytosol"/>
    <property type="evidence" value="ECO:0007669"/>
    <property type="project" value="TreeGrafter"/>
</dbReference>
<dbReference type="GO" id="GO:0004590">
    <property type="term" value="F:orotidine-5'-phosphate decarboxylase activity"/>
    <property type="evidence" value="ECO:0007669"/>
    <property type="project" value="UniProtKB-UniRule"/>
</dbReference>
<dbReference type="GO" id="GO:0006207">
    <property type="term" value="P:'de novo' pyrimidine nucleobase biosynthetic process"/>
    <property type="evidence" value="ECO:0007669"/>
    <property type="project" value="InterPro"/>
</dbReference>
<dbReference type="GO" id="GO:0044205">
    <property type="term" value="P:'de novo' UMP biosynthetic process"/>
    <property type="evidence" value="ECO:0007669"/>
    <property type="project" value="UniProtKB-UniRule"/>
</dbReference>
<dbReference type="CDD" id="cd04725">
    <property type="entry name" value="OMP_decarboxylase_like"/>
    <property type="match status" value="1"/>
</dbReference>
<dbReference type="FunFam" id="3.20.20.70:FF:000015">
    <property type="entry name" value="Orotidine 5'-phosphate decarboxylase"/>
    <property type="match status" value="1"/>
</dbReference>
<dbReference type="Gene3D" id="3.20.20.70">
    <property type="entry name" value="Aldolase class I"/>
    <property type="match status" value="1"/>
</dbReference>
<dbReference type="HAMAP" id="MF_01200_B">
    <property type="entry name" value="OMPdecase_type1_B"/>
    <property type="match status" value="1"/>
</dbReference>
<dbReference type="InterPro" id="IPR013785">
    <property type="entry name" value="Aldolase_TIM"/>
</dbReference>
<dbReference type="InterPro" id="IPR014732">
    <property type="entry name" value="OMPdecase"/>
</dbReference>
<dbReference type="InterPro" id="IPR018089">
    <property type="entry name" value="OMPdecase_AS"/>
</dbReference>
<dbReference type="InterPro" id="IPR047596">
    <property type="entry name" value="OMPdecase_bac"/>
</dbReference>
<dbReference type="InterPro" id="IPR001754">
    <property type="entry name" value="OMPdeCOase_dom"/>
</dbReference>
<dbReference type="InterPro" id="IPR011060">
    <property type="entry name" value="RibuloseP-bd_barrel"/>
</dbReference>
<dbReference type="NCBIfam" id="NF001273">
    <property type="entry name" value="PRK00230.1"/>
    <property type="match status" value="1"/>
</dbReference>
<dbReference type="NCBIfam" id="TIGR01740">
    <property type="entry name" value="pyrF"/>
    <property type="match status" value="1"/>
</dbReference>
<dbReference type="PANTHER" id="PTHR32119">
    <property type="entry name" value="OROTIDINE 5'-PHOSPHATE DECARBOXYLASE"/>
    <property type="match status" value="1"/>
</dbReference>
<dbReference type="PANTHER" id="PTHR32119:SF2">
    <property type="entry name" value="OROTIDINE 5'-PHOSPHATE DECARBOXYLASE"/>
    <property type="match status" value="1"/>
</dbReference>
<dbReference type="Pfam" id="PF00215">
    <property type="entry name" value="OMPdecase"/>
    <property type="match status" value="1"/>
</dbReference>
<dbReference type="SMART" id="SM00934">
    <property type="entry name" value="OMPdecase"/>
    <property type="match status" value="1"/>
</dbReference>
<dbReference type="SUPFAM" id="SSF51366">
    <property type="entry name" value="Ribulose-phoshate binding barrel"/>
    <property type="match status" value="1"/>
</dbReference>
<dbReference type="PROSITE" id="PS00156">
    <property type="entry name" value="OMPDECASE"/>
    <property type="match status" value="1"/>
</dbReference>
<protein>
    <recommendedName>
        <fullName evidence="1">Orotidine 5'-phosphate decarboxylase</fullName>
        <ecNumber evidence="1">4.1.1.23</ecNumber>
    </recommendedName>
    <alternativeName>
        <fullName evidence="1">OMP decarboxylase</fullName>
        <shortName evidence="1">OMPDCase</shortName>
        <shortName evidence="1">OMPdecase</shortName>
    </alternativeName>
</protein>
<sequence length="249" mass="26680">MTYDVLSAIASPIIVALDYTNISKALAFVDLISPLYCRLKIGKIMFTRFGPELIIKLQQRGFDIFLDLKYHDIPNTVAGAVSAAADLGVWMISLHAIGGEKMMAAACNALSNFGLGVPKLIAVTVLTSLSDEDLQIIGIPSTASDFAIRLAILAKNCGLDGVVCSAQEAEHIKNICGHHFTIVTPGIRLATDELGDQCRIMTVHQAQQAGVNYMVIGRPITQATKPNCRLVEILNSLKITANSVALSSN</sequence>
<keyword id="KW-0210">Decarboxylase</keyword>
<keyword id="KW-0456">Lyase</keyword>
<keyword id="KW-0665">Pyrimidine biosynthesis</keyword>
<keyword id="KW-1185">Reference proteome</keyword>
<organism>
    <name type="scientific">Baumannia cicadellinicola subsp. Homalodisca coagulata</name>
    <dbReference type="NCBI Taxonomy" id="374463"/>
    <lineage>
        <taxon>Bacteria</taxon>
        <taxon>Pseudomonadati</taxon>
        <taxon>Pseudomonadota</taxon>
        <taxon>Gammaproteobacteria</taxon>
        <taxon>Candidatus Palibaumannia</taxon>
    </lineage>
</organism>
<comment type="function">
    <text evidence="1">Catalyzes the decarboxylation of orotidine 5'-monophosphate (OMP) to uridine 5'-monophosphate (UMP).</text>
</comment>
<comment type="catalytic activity">
    <reaction evidence="1">
        <text>orotidine 5'-phosphate + H(+) = UMP + CO2</text>
        <dbReference type="Rhea" id="RHEA:11596"/>
        <dbReference type="ChEBI" id="CHEBI:15378"/>
        <dbReference type="ChEBI" id="CHEBI:16526"/>
        <dbReference type="ChEBI" id="CHEBI:57538"/>
        <dbReference type="ChEBI" id="CHEBI:57865"/>
        <dbReference type="EC" id="4.1.1.23"/>
    </reaction>
</comment>
<comment type="pathway">
    <text evidence="1">Pyrimidine metabolism; UMP biosynthesis via de novo pathway; UMP from orotate: step 2/2.</text>
</comment>
<comment type="subunit">
    <text evidence="1">Homodimer.</text>
</comment>
<comment type="similarity">
    <text evidence="1">Belongs to the OMP decarboxylase family. Type 1 subfamily.</text>
</comment>
<reference key="1">
    <citation type="journal article" date="2006" name="PLoS Biol.">
        <title>Metabolic complementarity and genomics of the dual bacterial symbiosis of sharpshooters.</title>
        <authorList>
            <person name="Wu D."/>
            <person name="Daugherty S.C."/>
            <person name="Van Aken S.E."/>
            <person name="Pai G.H."/>
            <person name="Watkins K.L."/>
            <person name="Khouri H."/>
            <person name="Tallon L.J."/>
            <person name="Zaborsky J.M."/>
            <person name="Dunbar H.E."/>
            <person name="Tran P.L."/>
            <person name="Moran N.A."/>
            <person name="Eisen J.A."/>
        </authorList>
    </citation>
    <scope>NUCLEOTIDE SEQUENCE [LARGE SCALE GENOMIC DNA]</scope>
</reference>
<proteinExistence type="inferred from homology"/>
<gene>
    <name evidence="1" type="primary">pyrF</name>
    <name type="ordered locus">BCI_0298</name>
</gene>
<accession>Q1LTG7</accession>